<feature type="chain" id="PRO_0000049665" description="Uncharacterized protein yosX">
    <location>
        <begin position="1"/>
        <end position="117"/>
    </location>
</feature>
<feature type="coiled-coil region" evidence="1">
    <location>
        <begin position="5"/>
        <end position="50"/>
    </location>
</feature>
<organismHost>
    <name type="scientific">Bacillus pumilus</name>
    <name type="common">Bacillus mesentericus</name>
    <dbReference type="NCBI Taxonomy" id="1408"/>
</organismHost>
<organismHost>
    <name type="scientific">Bacillus subtilis</name>
    <dbReference type="NCBI Taxonomy" id="1423"/>
</organismHost>
<evidence type="ECO:0000255" key="1"/>
<name>YOSX_BPSPB</name>
<proteinExistence type="predicted"/>
<reference key="1">
    <citation type="journal article" date="1999" name="Microbiology">
        <title>Nucleotide sequence of the Bacillus subtilis temperate bacteriophage SPbetac2.</title>
        <authorList>
            <person name="Lazarevic V."/>
            <person name="Duesterhoeft A."/>
            <person name="Soldo B."/>
            <person name="Hilbert H."/>
            <person name="Mauel C."/>
            <person name="Karamata D."/>
        </authorList>
    </citation>
    <scope>NUCLEOTIDE SEQUENCE [LARGE SCALE GENOMIC DNA]</scope>
</reference>
<protein>
    <recommendedName>
        <fullName>Uncharacterized protein yosX</fullName>
    </recommendedName>
</protein>
<sequence>MEVGDKIHNTNEQITALEKKKYQIETTLLEKQRDLLKLETQQNKAKLELLFELSEVLTQLEGEEWVSATIALRIIKRNKRKYLDLFDLNDDKAYVNKDKFKFLHDEFFELKQQLNDI</sequence>
<organism>
    <name type="scientific">Bacillus phage SPbeta</name>
    <name type="common">Bacillus phage SPBc2</name>
    <name type="synonym">Bacteriophage SP-beta</name>
    <dbReference type="NCBI Taxonomy" id="2932878"/>
    <lineage>
        <taxon>Viruses</taxon>
        <taxon>Duplodnaviria</taxon>
        <taxon>Heunggongvirae</taxon>
        <taxon>Uroviricota</taxon>
        <taxon>Caudoviricetes</taxon>
        <taxon>Spbetavirus</taxon>
        <taxon>Spbetavirus SPbeta</taxon>
    </lineage>
</organism>
<dbReference type="EMBL" id="AF020713">
    <property type="protein sequence ID" value="AAC13143.1"/>
    <property type="molecule type" value="Genomic_DNA"/>
</dbReference>
<dbReference type="PIR" id="T12934">
    <property type="entry name" value="T12934"/>
</dbReference>
<dbReference type="RefSeq" id="NP_046722.1">
    <property type="nucleotide sequence ID" value="NC_001884.1"/>
</dbReference>
<dbReference type="SMR" id="P68584"/>
<dbReference type="GeneID" id="1261413"/>
<dbReference type="KEGG" id="vg:1261413"/>
<dbReference type="Proteomes" id="UP000009091">
    <property type="component" value="Genome"/>
</dbReference>
<accession>P68584</accession>
<accession>O34646</accession>
<accession>O64182</accession>
<keyword id="KW-0175">Coiled coil</keyword>
<keyword id="KW-1185">Reference proteome</keyword>
<gene>
    <name type="primary">yosX</name>
    <name type="ordered locus">SPBc2p171</name>
</gene>